<dbReference type="EC" id="2.1.2.1" evidence="1"/>
<dbReference type="EMBL" id="CP000030">
    <property type="protein sequence ID" value="AAV86301.1"/>
    <property type="molecule type" value="Genomic_DNA"/>
</dbReference>
<dbReference type="RefSeq" id="WP_011114148.1">
    <property type="nucleotide sequence ID" value="NC_004842.2"/>
</dbReference>
<dbReference type="SMR" id="Q5PBM8"/>
<dbReference type="KEGG" id="ama:AM164"/>
<dbReference type="HOGENOM" id="CLU_022477_2_1_5"/>
<dbReference type="UniPathway" id="UPA00193"/>
<dbReference type="UniPathway" id="UPA00288">
    <property type="reaction ID" value="UER01023"/>
</dbReference>
<dbReference type="GO" id="GO:0005829">
    <property type="term" value="C:cytosol"/>
    <property type="evidence" value="ECO:0007669"/>
    <property type="project" value="TreeGrafter"/>
</dbReference>
<dbReference type="GO" id="GO:0004372">
    <property type="term" value="F:glycine hydroxymethyltransferase activity"/>
    <property type="evidence" value="ECO:0007669"/>
    <property type="project" value="UniProtKB-UniRule"/>
</dbReference>
<dbReference type="GO" id="GO:0030170">
    <property type="term" value="F:pyridoxal phosphate binding"/>
    <property type="evidence" value="ECO:0007669"/>
    <property type="project" value="UniProtKB-UniRule"/>
</dbReference>
<dbReference type="GO" id="GO:0019264">
    <property type="term" value="P:glycine biosynthetic process from serine"/>
    <property type="evidence" value="ECO:0007669"/>
    <property type="project" value="UniProtKB-UniRule"/>
</dbReference>
<dbReference type="GO" id="GO:0035999">
    <property type="term" value="P:tetrahydrofolate interconversion"/>
    <property type="evidence" value="ECO:0007669"/>
    <property type="project" value="UniProtKB-UniRule"/>
</dbReference>
<dbReference type="CDD" id="cd00378">
    <property type="entry name" value="SHMT"/>
    <property type="match status" value="1"/>
</dbReference>
<dbReference type="FunFam" id="3.40.640.10:FF:000001">
    <property type="entry name" value="Serine hydroxymethyltransferase"/>
    <property type="match status" value="1"/>
</dbReference>
<dbReference type="Gene3D" id="3.90.1150.10">
    <property type="entry name" value="Aspartate Aminotransferase, domain 1"/>
    <property type="match status" value="1"/>
</dbReference>
<dbReference type="Gene3D" id="3.40.640.10">
    <property type="entry name" value="Type I PLP-dependent aspartate aminotransferase-like (Major domain)"/>
    <property type="match status" value="1"/>
</dbReference>
<dbReference type="HAMAP" id="MF_00051">
    <property type="entry name" value="SHMT"/>
    <property type="match status" value="1"/>
</dbReference>
<dbReference type="InterPro" id="IPR015424">
    <property type="entry name" value="PyrdxlP-dep_Trfase"/>
</dbReference>
<dbReference type="InterPro" id="IPR015421">
    <property type="entry name" value="PyrdxlP-dep_Trfase_major"/>
</dbReference>
<dbReference type="InterPro" id="IPR015422">
    <property type="entry name" value="PyrdxlP-dep_Trfase_small"/>
</dbReference>
<dbReference type="InterPro" id="IPR001085">
    <property type="entry name" value="Ser_HO-MeTrfase"/>
</dbReference>
<dbReference type="InterPro" id="IPR049943">
    <property type="entry name" value="Ser_HO-MeTrfase-like"/>
</dbReference>
<dbReference type="InterPro" id="IPR019798">
    <property type="entry name" value="Ser_HO-MeTrfase_PLP_BS"/>
</dbReference>
<dbReference type="InterPro" id="IPR039429">
    <property type="entry name" value="SHMT-like_dom"/>
</dbReference>
<dbReference type="NCBIfam" id="NF000586">
    <property type="entry name" value="PRK00011.1"/>
    <property type="match status" value="1"/>
</dbReference>
<dbReference type="PANTHER" id="PTHR11680">
    <property type="entry name" value="SERINE HYDROXYMETHYLTRANSFERASE"/>
    <property type="match status" value="1"/>
</dbReference>
<dbReference type="PANTHER" id="PTHR11680:SF35">
    <property type="entry name" value="SERINE HYDROXYMETHYLTRANSFERASE 1"/>
    <property type="match status" value="1"/>
</dbReference>
<dbReference type="Pfam" id="PF00464">
    <property type="entry name" value="SHMT"/>
    <property type="match status" value="1"/>
</dbReference>
<dbReference type="PIRSF" id="PIRSF000412">
    <property type="entry name" value="SHMT"/>
    <property type="match status" value="1"/>
</dbReference>
<dbReference type="SUPFAM" id="SSF53383">
    <property type="entry name" value="PLP-dependent transferases"/>
    <property type="match status" value="1"/>
</dbReference>
<dbReference type="PROSITE" id="PS00096">
    <property type="entry name" value="SHMT"/>
    <property type="match status" value="1"/>
</dbReference>
<comment type="function">
    <text evidence="1">Catalyzes the reversible interconversion of serine and glycine with tetrahydrofolate (THF) serving as the one-carbon carrier. This reaction serves as the major source of one-carbon groups required for the biosynthesis of purines, thymidylate, methionine, and other important biomolecules. Also exhibits THF-independent aldolase activity toward beta-hydroxyamino acids, producing glycine and aldehydes, via a retro-aldol mechanism.</text>
</comment>
<comment type="catalytic activity">
    <reaction evidence="1">
        <text>(6R)-5,10-methylene-5,6,7,8-tetrahydrofolate + glycine + H2O = (6S)-5,6,7,8-tetrahydrofolate + L-serine</text>
        <dbReference type="Rhea" id="RHEA:15481"/>
        <dbReference type="ChEBI" id="CHEBI:15377"/>
        <dbReference type="ChEBI" id="CHEBI:15636"/>
        <dbReference type="ChEBI" id="CHEBI:33384"/>
        <dbReference type="ChEBI" id="CHEBI:57305"/>
        <dbReference type="ChEBI" id="CHEBI:57453"/>
        <dbReference type="EC" id="2.1.2.1"/>
    </reaction>
</comment>
<comment type="cofactor">
    <cofactor evidence="1">
        <name>pyridoxal 5'-phosphate</name>
        <dbReference type="ChEBI" id="CHEBI:597326"/>
    </cofactor>
</comment>
<comment type="pathway">
    <text evidence="1">One-carbon metabolism; tetrahydrofolate interconversion.</text>
</comment>
<comment type="pathway">
    <text evidence="1">Amino-acid biosynthesis; glycine biosynthesis; glycine from L-serine: step 1/1.</text>
</comment>
<comment type="subunit">
    <text evidence="1">Homodimer.</text>
</comment>
<comment type="subcellular location">
    <subcellularLocation>
        <location evidence="1">Cytoplasm</location>
    </subcellularLocation>
</comment>
<comment type="similarity">
    <text evidence="1">Belongs to the SHMT family.</text>
</comment>
<gene>
    <name evidence="1" type="primary">glyA</name>
    <name type="ordered locus">AM164</name>
</gene>
<evidence type="ECO:0000255" key="1">
    <source>
        <dbReference type="HAMAP-Rule" id="MF_00051"/>
    </source>
</evidence>
<accession>Q5PBM8</accession>
<keyword id="KW-0028">Amino-acid biosynthesis</keyword>
<keyword id="KW-0963">Cytoplasm</keyword>
<keyword id="KW-0554">One-carbon metabolism</keyword>
<keyword id="KW-0663">Pyridoxal phosphate</keyword>
<keyword id="KW-0808">Transferase</keyword>
<name>GLYA_ANAMM</name>
<proteinExistence type="inferred from homology"/>
<sequence>MVGYIGNVDIGVFDAEVANSMSAELERQNTLLQMIASENFVSRAVLQAQGSVLTNKYAEGYAGSRYYCGCALVDVVENLAVERLCRLFGCKFANVQPHSGSQANQQVFMALLKPGDTILGMSLDCGGHLTHGAAPNVSGRWFNAVSYGVNRDTGLIDMDEVEALALSAKPSLIIAGASSYPRRIDFAAFRAIADKVGAYLLADIAHYSGLIAGGCYPSPFGHAHVVTSTTHKTLRGPRGAVIMTDDEEIHKKIRLSVFPGMQGGPLMHVIAAKAVAFKEALHPDFKLYAQQVLENSRVLAGVLSSEGLDVVTGGTDSHIVLLDLRSKGVTGREVSSSLERAGIVCNKNAVPFDTEKPWVTSGIRLGSAAETSRGLGVPEFESIGRLVAKVVNACSLGQEKMSAAEAEVRREVNGLVRSLPMSAFPVCEVC</sequence>
<feature type="chain" id="PRO_0000234946" description="Serine hydroxymethyltransferase">
    <location>
        <begin position="1"/>
        <end position="430"/>
    </location>
</feature>
<feature type="binding site" evidence="1">
    <location>
        <position position="123"/>
    </location>
    <ligand>
        <name>(6S)-5,6,7,8-tetrahydrofolate</name>
        <dbReference type="ChEBI" id="CHEBI:57453"/>
    </ligand>
</feature>
<feature type="binding site" evidence="1">
    <location>
        <begin position="127"/>
        <end position="129"/>
    </location>
    <ligand>
        <name>(6S)-5,6,7,8-tetrahydrofolate</name>
        <dbReference type="ChEBI" id="CHEBI:57453"/>
    </ligand>
</feature>
<feature type="binding site" evidence="1">
    <location>
        <position position="248"/>
    </location>
    <ligand>
        <name>(6S)-5,6,7,8-tetrahydrofolate</name>
        <dbReference type="ChEBI" id="CHEBI:57453"/>
    </ligand>
</feature>
<feature type="site" description="Plays an important role in substrate specificity" evidence="1">
    <location>
        <position position="231"/>
    </location>
</feature>
<feature type="modified residue" description="N6-(pyridoxal phosphate)lysine" evidence="1">
    <location>
        <position position="232"/>
    </location>
</feature>
<reference key="1">
    <citation type="journal article" date="2005" name="Proc. Natl. Acad. Sci. U.S.A.">
        <title>Complete genome sequencing of Anaplasma marginale reveals that the surface is skewed to two superfamilies of outer membrane proteins.</title>
        <authorList>
            <person name="Brayton K.A."/>
            <person name="Kappmeyer L.S."/>
            <person name="Herndon D.R."/>
            <person name="Dark M.J."/>
            <person name="Tibbals D.L."/>
            <person name="Palmer G.H."/>
            <person name="McGuire T.C."/>
            <person name="Knowles D.P. Jr."/>
        </authorList>
    </citation>
    <scope>NUCLEOTIDE SEQUENCE [LARGE SCALE GENOMIC DNA]</scope>
    <source>
        <strain>St. Maries</strain>
    </source>
</reference>
<organism>
    <name type="scientific">Anaplasma marginale (strain St. Maries)</name>
    <dbReference type="NCBI Taxonomy" id="234826"/>
    <lineage>
        <taxon>Bacteria</taxon>
        <taxon>Pseudomonadati</taxon>
        <taxon>Pseudomonadota</taxon>
        <taxon>Alphaproteobacteria</taxon>
        <taxon>Rickettsiales</taxon>
        <taxon>Anaplasmataceae</taxon>
        <taxon>Anaplasma</taxon>
    </lineage>
</organism>
<protein>
    <recommendedName>
        <fullName evidence="1">Serine hydroxymethyltransferase</fullName>
        <shortName evidence="1">SHMT</shortName>
        <shortName evidence="1">Serine methylase</shortName>
        <ecNumber evidence="1">2.1.2.1</ecNumber>
    </recommendedName>
</protein>